<keyword id="KW-0027">Amidation</keyword>
<keyword id="KW-0044">Antibiotic</keyword>
<keyword id="KW-0929">Antimicrobial</keyword>
<keyword id="KW-0391">Immunity</keyword>
<keyword id="KW-0399">Innate immunity</keyword>
<keyword id="KW-1185">Reference proteome</keyword>
<keyword id="KW-0964">Secreted</keyword>
<keyword id="KW-0732">Signal</keyword>
<feature type="signal peptide">
    <location>
        <begin position="1"/>
        <end position="23"/>
    </location>
</feature>
<feature type="chain" id="PRO_0000004851" description="Cecropin-C">
    <location>
        <begin position="24"/>
        <end position="62"/>
    </location>
</feature>
<feature type="modified residue" description="Arginine amide" evidence="1">
    <location>
        <position position="62"/>
    </location>
</feature>
<name>CECC_DROSE</name>
<evidence type="ECO:0000250" key="1"/>
<evidence type="ECO:0000305" key="2"/>
<protein>
    <recommendedName>
        <fullName>Cecropin-C</fullName>
    </recommendedName>
</protein>
<dbReference type="EMBL" id="AB047058">
    <property type="protein sequence ID" value="BAB78563.1"/>
    <property type="molecule type" value="Genomic_DNA"/>
</dbReference>
<dbReference type="EMBL" id="CH480819">
    <property type="protein sequence ID" value="EDW53500.1"/>
    <property type="molecule type" value="Genomic_DNA"/>
</dbReference>
<dbReference type="SMR" id="P84020"/>
<dbReference type="STRING" id="7238.P84020"/>
<dbReference type="EnsemblMetazoa" id="FBtr0195856">
    <property type="protein sequence ID" value="FBpp0194348"/>
    <property type="gene ID" value="FBgn0046928"/>
</dbReference>
<dbReference type="EnsemblMetazoa" id="XM_002037305.2">
    <property type="protein sequence ID" value="XP_002037341.1"/>
    <property type="gene ID" value="LOC6612847"/>
</dbReference>
<dbReference type="GeneID" id="6612847"/>
<dbReference type="KEGG" id="dse:6612847"/>
<dbReference type="HOGENOM" id="CLU_187909_1_0_1"/>
<dbReference type="OMA" id="IAICNVQ"/>
<dbReference type="OrthoDB" id="58805at7215"/>
<dbReference type="PhylomeDB" id="P84020"/>
<dbReference type="ChiTaRS" id="CecC">
    <property type="organism name" value="fly"/>
</dbReference>
<dbReference type="Proteomes" id="UP000001292">
    <property type="component" value="Unassembled WGS sequence"/>
</dbReference>
<dbReference type="GO" id="GO:0005576">
    <property type="term" value="C:extracellular region"/>
    <property type="evidence" value="ECO:0000250"/>
    <property type="project" value="UniProtKB"/>
</dbReference>
<dbReference type="GO" id="GO:0005615">
    <property type="term" value="C:extracellular space"/>
    <property type="evidence" value="ECO:0007669"/>
    <property type="project" value="EnsemblMetazoa"/>
</dbReference>
<dbReference type="GO" id="GO:0019731">
    <property type="term" value="P:antibacterial humoral response"/>
    <property type="evidence" value="ECO:0007669"/>
    <property type="project" value="EnsemblMetazoa"/>
</dbReference>
<dbReference type="GO" id="GO:0050829">
    <property type="term" value="P:defense response to Gram-negative bacterium"/>
    <property type="evidence" value="ECO:0000250"/>
    <property type="project" value="UniProtKB"/>
</dbReference>
<dbReference type="GO" id="GO:0050830">
    <property type="term" value="P:defense response to Gram-positive bacterium"/>
    <property type="evidence" value="ECO:0000250"/>
    <property type="project" value="UniProtKB"/>
</dbReference>
<dbReference type="GO" id="GO:0051607">
    <property type="term" value="P:defense response to virus"/>
    <property type="evidence" value="ECO:0007669"/>
    <property type="project" value="EnsemblMetazoa"/>
</dbReference>
<dbReference type="GO" id="GO:0045087">
    <property type="term" value="P:innate immune response"/>
    <property type="evidence" value="ECO:0007669"/>
    <property type="project" value="UniProtKB-KW"/>
</dbReference>
<dbReference type="GO" id="GO:0140460">
    <property type="term" value="P:response to Gram-negative bacterium"/>
    <property type="evidence" value="ECO:0007669"/>
    <property type="project" value="EnsemblMetazoa"/>
</dbReference>
<dbReference type="InterPro" id="IPR000875">
    <property type="entry name" value="Cecropin"/>
</dbReference>
<dbReference type="InterPro" id="IPR020400">
    <property type="entry name" value="Cecropin_insect"/>
</dbReference>
<dbReference type="PANTHER" id="PTHR38329">
    <property type="entry name" value="CECROPIN-A1-RELATED"/>
    <property type="match status" value="1"/>
</dbReference>
<dbReference type="PANTHER" id="PTHR38329:SF1">
    <property type="entry name" value="CECROPIN-A1-RELATED"/>
    <property type="match status" value="1"/>
</dbReference>
<dbReference type="Pfam" id="PF00272">
    <property type="entry name" value="Cecropin"/>
    <property type="match status" value="1"/>
</dbReference>
<dbReference type="PROSITE" id="PS00268">
    <property type="entry name" value="CECROPIN"/>
    <property type="match status" value="1"/>
</dbReference>
<sequence length="63" mass="6813">MNFYKIFVFVALILAISIGQSEAGWLKKLGKRIERIGQHTRDATIQGLGIAQQAANVAATARG</sequence>
<proteinExistence type="inferred from homology"/>
<reference key="1">
    <citation type="journal article" date="2002" name="J. Mol. Evol.">
        <title>Rapid evolution of the male-specific antibacterial protein andropin gene in Drosophila.</title>
        <authorList>
            <person name="Date-Ito A."/>
            <person name="Kasahara K."/>
            <person name="Sawai H."/>
            <person name="Chigusa S.I."/>
        </authorList>
    </citation>
    <scope>NUCLEOTIDE SEQUENCE [GENOMIC DNA]</scope>
    <source>
        <strain>Seychelles</strain>
    </source>
</reference>
<reference key="2">
    <citation type="journal article" date="2007" name="Nature">
        <title>Evolution of genes and genomes on the Drosophila phylogeny.</title>
        <authorList>
            <consortium name="Drosophila 12 genomes consortium"/>
        </authorList>
    </citation>
    <scope>NUCLEOTIDE SEQUENCE [LARGE SCALE GENOMIC DNA]</scope>
    <source>
        <strain>Rob3c / Tucson 14021-0248.25</strain>
    </source>
</reference>
<accession>P84020</accession>
<accession>B4HZP3</accession>
<accession>O16837</accession>
<accession>P29561</accession>
<accession>Q9VA89</accession>
<organism>
    <name type="scientific">Drosophila sechellia</name>
    <name type="common">Fruit fly</name>
    <dbReference type="NCBI Taxonomy" id="7238"/>
    <lineage>
        <taxon>Eukaryota</taxon>
        <taxon>Metazoa</taxon>
        <taxon>Ecdysozoa</taxon>
        <taxon>Arthropoda</taxon>
        <taxon>Hexapoda</taxon>
        <taxon>Insecta</taxon>
        <taxon>Pterygota</taxon>
        <taxon>Neoptera</taxon>
        <taxon>Endopterygota</taxon>
        <taxon>Diptera</taxon>
        <taxon>Brachycera</taxon>
        <taxon>Muscomorpha</taxon>
        <taxon>Ephydroidea</taxon>
        <taxon>Drosophilidae</taxon>
        <taxon>Drosophila</taxon>
        <taxon>Sophophora</taxon>
    </lineage>
</organism>
<comment type="function">
    <text>Cecropins have lytic and antibacterial activity against several Gram-positive and Gram-negative bacteria.</text>
</comment>
<comment type="subcellular location">
    <subcellularLocation>
        <location>Secreted</location>
    </subcellularLocation>
</comment>
<comment type="similarity">
    <text evidence="2">Belongs to the cecropin family.</text>
</comment>
<gene>
    <name type="primary">CecC</name>
    <name type="ORF">GM12871</name>
</gene>